<dbReference type="EC" id="2.7.7.6" evidence="1"/>
<dbReference type="EMBL" id="CP000611">
    <property type="protein sequence ID" value="ABQ72403.1"/>
    <property type="molecule type" value="Genomic_DNA"/>
</dbReference>
<dbReference type="RefSeq" id="WP_003403413.1">
    <property type="nucleotide sequence ID" value="NZ_CP016972.1"/>
</dbReference>
<dbReference type="EMDB" id="EMD-21406"/>
<dbReference type="EMDB" id="EMD-21407"/>
<dbReference type="EMDB" id="EMD-21408"/>
<dbReference type="EMDB" id="EMD-21409"/>
<dbReference type="EMDB" id="EMD-9037"/>
<dbReference type="EMDB" id="EMD-9039"/>
<dbReference type="EMDB" id="EMD-9041"/>
<dbReference type="EMDB" id="EMD-9047"/>
<dbReference type="SMR" id="A5U053"/>
<dbReference type="KEGG" id="mra:MRA_0677"/>
<dbReference type="eggNOG" id="COG0086">
    <property type="taxonomic scope" value="Bacteria"/>
</dbReference>
<dbReference type="HOGENOM" id="CLU_000524_3_1_11"/>
<dbReference type="Proteomes" id="UP000001988">
    <property type="component" value="Chromosome"/>
</dbReference>
<dbReference type="GO" id="GO:0000428">
    <property type="term" value="C:DNA-directed RNA polymerase complex"/>
    <property type="evidence" value="ECO:0007669"/>
    <property type="project" value="UniProtKB-KW"/>
</dbReference>
<dbReference type="GO" id="GO:0003677">
    <property type="term" value="F:DNA binding"/>
    <property type="evidence" value="ECO:0007669"/>
    <property type="project" value="UniProtKB-UniRule"/>
</dbReference>
<dbReference type="GO" id="GO:0003899">
    <property type="term" value="F:DNA-directed RNA polymerase activity"/>
    <property type="evidence" value="ECO:0007669"/>
    <property type="project" value="UniProtKB-UniRule"/>
</dbReference>
<dbReference type="GO" id="GO:0000287">
    <property type="term" value="F:magnesium ion binding"/>
    <property type="evidence" value="ECO:0007669"/>
    <property type="project" value="UniProtKB-UniRule"/>
</dbReference>
<dbReference type="GO" id="GO:0008270">
    <property type="term" value="F:zinc ion binding"/>
    <property type="evidence" value="ECO:0007669"/>
    <property type="project" value="UniProtKB-UniRule"/>
</dbReference>
<dbReference type="GO" id="GO:0006351">
    <property type="term" value="P:DNA-templated transcription"/>
    <property type="evidence" value="ECO:0007669"/>
    <property type="project" value="UniProtKB-UniRule"/>
</dbReference>
<dbReference type="CDD" id="cd02655">
    <property type="entry name" value="RNAP_beta'_C"/>
    <property type="match status" value="1"/>
</dbReference>
<dbReference type="CDD" id="cd01609">
    <property type="entry name" value="RNAP_beta'_N"/>
    <property type="match status" value="1"/>
</dbReference>
<dbReference type="FunFam" id="1.10.132.30:FF:000003">
    <property type="entry name" value="DNA-directed RNA polymerase subunit beta"/>
    <property type="match status" value="1"/>
</dbReference>
<dbReference type="FunFam" id="1.10.150.390:FF:000002">
    <property type="entry name" value="DNA-directed RNA polymerase subunit beta"/>
    <property type="match status" value="1"/>
</dbReference>
<dbReference type="FunFam" id="1.10.274.100:FF:000009">
    <property type="entry name" value="DNA-directed RNA polymerase subunit beta"/>
    <property type="match status" value="1"/>
</dbReference>
<dbReference type="FunFam" id="1.10.40.90:FF:000001">
    <property type="entry name" value="DNA-directed RNA polymerase subunit beta"/>
    <property type="match status" value="1"/>
</dbReference>
<dbReference type="FunFam" id="4.10.860.120:FF:000001">
    <property type="entry name" value="DNA-directed RNA polymerase subunit beta"/>
    <property type="match status" value="1"/>
</dbReference>
<dbReference type="Gene3D" id="1.10.132.30">
    <property type="match status" value="1"/>
</dbReference>
<dbReference type="Gene3D" id="1.10.150.390">
    <property type="match status" value="1"/>
</dbReference>
<dbReference type="Gene3D" id="1.10.1790.20">
    <property type="match status" value="1"/>
</dbReference>
<dbReference type="Gene3D" id="1.10.40.90">
    <property type="match status" value="1"/>
</dbReference>
<dbReference type="Gene3D" id="2.40.40.20">
    <property type="match status" value="1"/>
</dbReference>
<dbReference type="Gene3D" id="2.40.50.100">
    <property type="match status" value="1"/>
</dbReference>
<dbReference type="Gene3D" id="4.10.860.120">
    <property type="entry name" value="RNA polymerase II, clamp domain"/>
    <property type="match status" value="1"/>
</dbReference>
<dbReference type="Gene3D" id="1.10.274.100">
    <property type="entry name" value="RNA polymerase Rpb1, domain 3"/>
    <property type="match status" value="1"/>
</dbReference>
<dbReference type="HAMAP" id="MF_01322">
    <property type="entry name" value="RNApol_bact_RpoC"/>
    <property type="match status" value="1"/>
</dbReference>
<dbReference type="InterPro" id="IPR045867">
    <property type="entry name" value="DNA-dir_RpoC_beta_prime"/>
</dbReference>
<dbReference type="InterPro" id="IPR012754">
    <property type="entry name" value="DNA-dir_RpoC_beta_prime_bact"/>
</dbReference>
<dbReference type="InterPro" id="IPR000722">
    <property type="entry name" value="RNA_pol_asu"/>
</dbReference>
<dbReference type="InterPro" id="IPR006592">
    <property type="entry name" value="RNA_pol_N"/>
</dbReference>
<dbReference type="InterPro" id="IPR007080">
    <property type="entry name" value="RNA_pol_Rpb1_1"/>
</dbReference>
<dbReference type="InterPro" id="IPR007066">
    <property type="entry name" value="RNA_pol_Rpb1_3"/>
</dbReference>
<dbReference type="InterPro" id="IPR042102">
    <property type="entry name" value="RNA_pol_Rpb1_3_sf"/>
</dbReference>
<dbReference type="InterPro" id="IPR007083">
    <property type="entry name" value="RNA_pol_Rpb1_4"/>
</dbReference>
<dbReference type="InterPro" id="IPR007081">
    <property type="entry name" value="RNA_pol_Rpb1_5"/>
</dbReference>
<dbReference type="InterPro" id="IPR044893">
    <property type="entry name" value="RNA_pol_Rpb1_clamp_domain"/>
</dbReference>
<dbReference type="InterPro" id="IPR038120">
    <property type="entry name" value="Rpb1_funnel_sf"/>
</dbReference>
<dbReference type="NCBIfam" id="NF011498">
    <property type="entry name" value="PRK14906.1"/>
    <property type="match status" value="1"/>
</dbReference>
<dbReference type="NCBIfam" id="TIGR02386">
    <property type="entry name" value="rpoC_TIGR"/>
    <property type="match status" value="1"/>
</dbReference>
<dbReference type="PANTHER" id="PTHR19376">
    <property type="entry name" value="DNA-DIRECTED RNA POLYMERASE"/>
    <property type="match status" value="1"/>
</dbReference>
<dbReference type="PANTHER" id="PTHR19376:SF54">
    <property type="entry name" value="DNA-DIRECTED RNA POLYMERASE SUBUNIT BETA"/>
    <property type="match status" value="1"/>
</dbReference>
<dbReference type="Pfam" id="PF04997">
    <property type="entry name" value="RNA_pol_Rpb1_1"/>
    <property type="match status" value="1"/>
</dbReference>
<dbReference type="Pfam" id="PF00623">
    <property type="entry name" value="RNA_pol_Rpb1_2"/>
    <property type="match status" value="1"/>
</dbReference>
<dbReference type="Pfam" id="PF04983">
    <property type="entry name" value="RNA_pol_Rpb1_3"/>
    <property type="match status" value="1"/>
</dbReference>
<dbReference type="Pfam" id="PF05000">
    <property type="entry name" value="RNA_pol_Rpb1_4"/>
    <property type="match status" value="1"/>
</dbReference>
<dbReference type="Pfam" id="PF04998">
    <property type="entry name" value="RNA_pol_Rpb1_5"/>
    <property type="match status" value="1"/>
</dbReference>
<dbReference type="SMART" id="SM00663">
    <property type="entry name" value="RPOLA_N"/>
    <property type="match status" value="1"/>
</dbReference>
<dbReference type="SUPFAM" id="SSF64484">
    <property type="entry name" value="beta and beta-prime subunits of DNA dependent RNA-polymerase"/>
    <property type="match status" value="1"/>
</dbReference>
<name>RPOC_MYCTA</name>
<comment type="function">
    <text evidence="1">DNA-dependent RNA polymerase catalyzes the transcription of DNA into RNA using the four ribonucleoside triphosphates as substrates.</text>
</comment>
<comment type="catalytic activity">
    <reaction evidence="1">
        <text>RNA(n) + a ribonucleoside 5'-triphosphate = RNA(n+1) + diphosphate</text>
        <dbReference type="Rhea" id="RHEA:21248"/>
        <dbReference type="Rhea" id="RHEA-COMP:14527"/>
        <dbReference type="Rhea" id="RHEA-COMP:17342"/>
        <dbReference type="ChEBI" id="CHEBI:33019"/>
        <dbReference type="ChEBI" id="CHEBI:61557"/>
        <dbReference type="ChEBI" id="CHEBI:140395"/>
        <dbReference type="EC" id="2.7.7.6"/>
    </reaction>
</comment>
<comment type="cofactor">
    <cofactor evidence="1">
        <name>Mg(2+)</name>
        <dbReference type="ChEBI" id="CHEBI:18420"/>
    </cofactor>
    <text evidence="1">Binds 1 Mg(2+) ion per subunit.</text>
</comment>
<comment type="cofactor">
    <cofactor evidence="1">
        <name>Zn(2+)</name>
        <dbReference type="ChEBI" id="CHEBI:29105"/>
    </cofactor>
    <text evidence="1">Binds 2 Zn(2+) ions per subunit.</text>
</comment>
<comment type="subunit">
    <text evidence="1">The RNAP catalytic core consists of 2 alpha, 1 beta, 1 beta' and 1 omega subunit. When a sigma factor is associated with the core the holoenzyme is formed, which can initiate transcription.</text>
</comment>
<comment type="similarity">
    <text evidence="1">Belongs to the RNA polymerase beta' chain family.</text>
</comment>
<protein>
    <recommendedName>
        <fullName evidence="1">DNA-directed RNA polymerase subunit beta'</fullName>
        <shortName evidence="1">RNAP subunit beta'</shortName>
        <ecNumber evidence="1">2.7.7.6</ecNumber>
    </recommendedName>
    <alternativeName>
        <fullName evidence="1">RNA polymerase subunit beta'</fullName>
    </alternativeName>
    <alternativeName>
        <fullName evidence="1">Transcriptase subunit beta'</fullName>
    </alternativeName>
</protein>
<sequence length="1316" mass="146769">MLDVNFFDELRIGLATAEDIRQWSYGEVKKPETINYRTLKPEKDGLFCEKIFGPTRDWECYCGKYKRVRFKGIICERCGVEVTRAKVRRERMGHIELAAPVTHIWYFKGVPSRLGYLLDLAPKDLEKIIYFAAYVITSVDEEMRHNELSTLEAEMAVERKAVEDQRDGELEARAQKLEADLAELEAEGAKADARRKVRDGGEREMRQIRDRAQRELDRLEDIWSTFTKLAPKQLIVDENLYRELVDRYGEYFTGAMGAESIQKLIENFDIDAEAESLRDVIRNGKGQKKLRALKRLKVVAAFQQSGNSPMGMVLDAVPVIPPELRPMVQLDGGRFATSDLNDLYRRVINRNNRLKRLIDLGAPEIIVNNEKRMLQESVDALFDNGRRGRPVTGPGNRPLKSLSDLLKGKQGRFRQNLLGKRVDYSGRSVIVVGPQLKLHQCGLPKLMALELFKPFVMKRLVDLNHAQNIKSAKRMVERQRPQVWDVLEEVIAEHPVLLNRAPTLHRLGIQAFEPMLVEGKAIQLHPLVCEAFNADFDGDQMAVHLPLSAEAQAEARILMLSSNNILSPASGRPLAMPRLDMVTGLYYLTTEVPGDTGEYQPASGDHPETGVYSSPAEAIMAADRGVLSVRAKIKVRLTQLRPPVEIEAELFGHSGWQPGDAWMAETTLGRVMFNELLPLGYPFVNKQMHKKVQAAIINDLAERYPMIVVAQTVDKLKDAGFYWATRSGVTVSMADVLVPPRKKEILDHYEERADKVEKQFQRGALNHDERNEALVEIWKEATDEVGQALREHYPDDNPIITIVDSGATGNFTQTRTLAGMKGLVTNPKGEFIPRPVKSSFREGLTVLEYFINTHGARKGLADTALRTADSGYLTRRLVDVSQDVIVREHDCQTERGIVVELAERAPDGTLIRDPYIETSAYARTLGTDAVDEAGNVIVERGQDLGDPEIDALLAAGITQVKVRSVLTCATSTGVCATCYGRSMATGKLVDIGEAVGIVAAQSIGEPGTQLTMRTFHQGGVGEDITGGLPRVQELFEARVPRGKAPIADVTGRVRLEDGERFYKITIVPDDGGEEVVYDKISKRQRLRVFKHEDGSERVLSDGDHVEVGQQLMEGSADPHEVLRVQGPREVQIHLVREVQEVYRAQGVSIHDKHIEVIVRQMLRRVTIIDSGSTEFLPGSLIDRAEFEAENRRVVAEGGEPAAGRPVLMGITKASLATDSWLSAASFQETTRVLTDAAINCRSDKLNGLKENVIIGKLIPAGTGINRYRNIAVQPTEEARAAAYTIPSYEDQYYSPDFGAATGAAVPLDDYGYSDYR</sequence>
<feature type="chain" id="PRO_0000308859" description="DNA-directed RNA polymerase subunit beta'">
    <location>
        <begin position="1"/>
        <end position="1316"/>
    </location>
</feature>
<feature type="binding site" evidence="1">
    <location>
        <position position="60"/>
    </location>
    <ligand>
        <name>Zn(2+)</name>
        <dbReference type="ChEBI" id="CHEBI:29105"/>
        <label>1</label>
    </ligand>
</feature>
<feature type="binding site" evidence="1">
    <location>
        <position position="62"/>
    </location>
    <ligand>
        <name>Zn(2+)</name>
        <dbReference type="ChEBI" id="CHEBI:29105"/>
        <label>1</label>
    </ligand>
</feature>
<feature type="binding site" evidence="1">
    <location>
        <position position="75"/>
    </location>
    <ligand>
        <name>Zn(2+)</name>
        <dbReference type="ChEBI" id="CHEBI:29105"/>
        <label>1</label>
    </ligand>
</feature>
<feature type="binding site" evidence="1">
    <location>
        <position position="78"/>
    </location>
    <ligand>
        <name>Zn(2+)</name>
        <dbReference type="ChEBI" id="CHEBI:29105"/>
        <label>1</label>
    </ligand>
</feature>
<feature type="binding site" evidence="1">
    <location>
        <position position="535"/>
    </location>
    <ligand>
        <name>Mg(2+)</name>
        <dbReference type="ChEBI" id="CHEBI:18420"/>
    </ligand>
</feature>
<feature type="binding site" evidence="1">
    <location>
        <position position="537"/>
    </location>
    <ligand>
        <name>Mg(2+)</name>
        <dbReference type="ChEBI" id="CHEBI:18420"/>
    </ligand>
</feature>
<feature type="binding site" evidence="1">
    <location>
        <position position="539"/>
    </location>
    <ligand>
        <name>Mg(2+)</name>
        <dbReference type="ChEBI" id="CHEBI:18420"/>
    </ligand>
</feature>
<feature type="binding site" evidence="1">
    <location>
        <position position="891"/>
    </location>
    <ligand>
        <name>Zn(2+)</name>
        <dbReference type="ChEBI" id="CHEBI:29105"/>
        <label>2</label>
    </ligand>
</feature>
<feature type="binding site" evidence="1">
    <location>
        <position position="968"/>
    </location>
    <ligand>
        <name>Zn(2+)</name>
        <dbReference type="ChEBI" id="CHEBI:29105"/>
        <label>2</label>
    </ligand>
</feature>
<feature type="binding site" evidence="1">
    <location>
        <position position="975"/>
    </location>
    <ligand>
        <name>Zn(2+)</name>
        <dbReference type="ChEBI" id="CHEBI:29105"/>
        <label>2</label>
    </ligand>
</feature>
<feature type="binding site" evidence="1">
    <location>
        <position position="978"/>
    </location>
    <ligand>
        <name>Zn(2+)</name>
        <dbReference type="ChEBI" id="CHEBI:29105"/>
        <label>2</label>
    </ligand>
</feature>
<evidence type="ECO:0000255" key="1">
    <source>
        <dbReference type="HAMAP-Rule" id="MF_01322"/>
    </source>
</evidence>
<gene>
    <name evidence="1" type="primary">rpoC</name>
    <name type="ordered locus">MRA_0677</name>
</gene>
<proteinExistence type="inferred from homology"/>
<accession>A5U053</accession>
<organism>
    <name type="scientific">Mycobacterium tuberculosis (strain ATCC 25177 / H37Ra)</name>
    <dbReference type="NCBI Taxonomy" id="419947"/>
    <lineage>
        <taxon>Bacteria</taxon>
        <taxon>Bacillati</taxon>
        <taxon>Actinomycetota</taxon>
        <taxon>Actinomycetes</taxon>
        <taxon>Mycobacteriales</taxon>
        <taxon>Mycobacteriaceae</taxon>
        <taxon>Mycobacterium</taxon>
        <taxon>Mycobacterium tuberculosis complex</taxon>
    </lineage>
</organism>
<reference key="1">
    <citation type="journal article" date="2008" name="PLoS ONE">
        <title>Genetic basis of virulence attenuation revealed by comparative genomic analysis of Mycobacterium tuberculosis strain H37Ra versus H37Rv.</title>
        <authorList>
            <person name="Zheng H."/>
            <person name="Lu L."/>
            <person name="Wang B."/>
            <person name="Pu S."/>
            <person name="Zhang X."/>
            <person name="Zhu G."/>
            <person name="Shi W."/>
            <person name="Zhang L."/>
            <person name="Wang H."/>
            <person name="Wang S."/>
            <person name="Zhao G."/>
            <person name="Zhang Y."/>
        </authorList>
    </citation>
    <scope>NUCLEOTIDE SEQUENCE [LARGE SCALE GENOMIC DNA]</scope>
    <source>
        <strain>ATCC 25177 / H37Ra</strain>
    </source>
</reference>
<keyword id="KW-0240">DNA-directed RNA polymerase</keyword>
<keyword id="KW-0460">Magnesium</keyword>
<keyword id="KW-0479">Metal-binding</keyword>
<keyword id="KW-0548">Nucleotidyltransferase</keyword>
<keyword id="KW-1185">Reference proteome</keyword>
<keyword id="KW-0804">Transcription</keyword>
<keyword id="KW-0808">Transferase</keyword>
<keyword id="KW-0862">Zinc</keyword>